<keyword id="KW-0229">DNA integration</keyword>
<keyword id="KW-0233">DNA recombination</keyword>
<keyword id="KW-0238">DNA-binding</keyword>
<keyword id="KW-0614">Plasmid</keyword>
<keyword id="KW-1179">Viral genome integration</keyword>
<keyword id="KW-1160">Virus entry into host cell</keyword>
<protein>
    <recommendedName>
        <fullName>Integrase</fullName>
    </recommendedName>
</protein>
<name>INTR_STRAM</name>
<accession>P15435</accession>
<reference key="1">
    <citation type="journal article" date="1989" name="EMBO J.">
        <title>The integrated conjugative plasmid pSAM2 of Streptomyces ambofaciens is related to temperate bacteriophages.</title>
        <authorList>
            <person name="Boccard F."/>
            <person name="Smokvina T."/>
            <person name="Pernodet J.L."/>
            <person name="Friedmann A."/>
            <person name="Guerineau M."/>
        </authorList>
    </citation>
    <scope>NUCLEOTIDE SEQUENCE [GENOMIC DNA]</scope>
    <source>
        <strain>ATCC 23877 / 3486 / DSM 40053 / JCM 4204 / NBRC 12836 / NRRL B-2516</strain>
    </source>
</reference>
<reference key="2">
    <citation type="journal article" date="1998" name="J. Bacteriol.">
        <title>Replicase, excisionase, and integrase genes of the Streptomyces element pSAM2 constitute an operon positively regulated by the pra gene.</title>
        <authorList>
            <person name="Sezonov G."/>
            <person name="Duchene A.M."/>
            <person name="Friedmann A."/>
            <person name="Guerineau M."/>
            <person name="Pernodet J.L."/>
        </authorList>
    </citation>
    <scope>NUCLEOTIDE SEQUENCE [GENOMIC DNA]</scope>
    <source>
        <strain>ATCC 15154 / NBRC 13685 / NRRL 2420 / Isolate B3</strain>
    </source>
</reference>
<feature type="chain" id="PRO_0000197533" description="Integrase">
    <location>
        <begin position="1"/>
        <end position="388"/>
    </location>
</feature>
<feature type="domain" description="Core-binding (CB)" evidence="2">
    <location>
        <begin position="70"/>
        <end position="151"/>
    </location>
</feature>
<feature type="domain" description="Tyr recombinase" evidence="1">
    <location>
        <begin position="173"/>
        <end position="379"/>
    </location>
</feature>
<feature type="active site" evidence="1">
    <location>
        <position position="208"/>
    </location>
</feature>
<feature type="active site" evidence="1">
    <location>
        <position position="249"/>
    </location>
</feature>
<feature type="active site" evidence="1">
    <location>
        <position position="330"/>
    </location>
</feature>
<feature type="active site" evidence="1">
    <location>
        <position position="353"/>
    </location>
</feature>
<feature type="active site" description="O-(3'-phospho-DNA)-tyrosine intermediate" evidence="1">
    <location>
        <position position="363"/>
    </location>
</feature>
<gene>
    <name type="primary">int</name>
</gene>
<geneLocation type="plasmid">
    <name>pSAM2</name>
</geneLocation>
<comment type="function">
    <text>Required for integration of pSAM2.</text>
</comment>
<comment type="similarity">
    <text evidence="3">Belongs to the 'phage' integrase family.</text>
</comment>
<proteinExistence type="inferred from homology"/>
<dbReference type="EMBL" id="X14899">
    <property type="protein sequence ID" value="CAA33029.1"/>
    <property type="molecule type" value="Genomic_DNA"/>
</dbReference>
<dbReference type="EMBL" id="AJ005260">
    <property type="protein sequence ID" value="CAA06457.1"/>
    <property type="molecule type" value="Genomic_DNA"/>
</dbReference>
<dbReference type="PIR" id="S04110">
    <property type="entry name" value="S04110"/>
</dbReference>
<dbReference type="SMR" id="P15435"/>
<dbReference type="OMA" id="PHIAVWR"/>
<dbReference type="GO" id="GO:0003677">
    <property type="term" value="F:DNA binding"/>
    <property type="evidence" value="ECO:0007669"/>
    <property type="project" value="UniProtKB-KW"/>
</dbReference>
<dbReference type="GO" id="GO:0015074">
    <property type="term" value="P:DNA integration"/>
    <property type="evidence" value="ECO:0007669"/>
    <property type="project" value="UniProtKB-KW"/>
</dbReference>
<dbReference type="GO" id="GO:0006310">
    <property type="term" value="P:DNA recombination"/>
    <property type="evidence" value="ECO:0007669"/>
    <property type="project" value="UniProtKB-KW"/>
</dbReference>
<dbReference type="GO" id="GO:0075713">
    <property type="term" value="P:establishment of integrated proviral latency"/>
    <property type="evidence" value="ECO:0007669"/>
    <property type="project" value="UniProtKB-KW"/>
</dbReference>
<dbReference type="GO" id="GO:0046718">
    <property type="term" value="P:symbiont entry into host cell"/>
    <property type="evidence" value="ECO:0007669"/>
    <property type="project" value="UniProtKB-KW"/>
</dbReference>
<dbReference type="GO" id="GO:0044826">
    <property type="term" value="P:viral genome integration into host DNA"/>
    <property type="evidence" value="ECO:0007669"/>
    <property type="project" value="UniProtKB-KW"/>
</dbReference>
<dbReference type="CDD" id="cd01189">
    <property type="entry name" value="INT_ICEBs1_C_like"/>
    <property type="match status" value="1"/>
</dbReference>
<dbReference type="Gene3D" id="1.10.150.130">
    <property type="match status" value="1"/>
</dbReference>
<dbReference type="Gene3D" id="1.10.443.10">
    <property type="entry name" value="Intergrase catalytic core"/>
    <property type="match status" value="1"/>
</dbReference>
<dbReference type="InterPro" id="IPR044068">
    <property type="entry name" value="CB"/>
</dbReference>
<dbReference type="InterPro" id="IPR011010">
    <property type="entry name" value="DNA_brk_join_enz"/>
</dbReference>
<dbReference type="InterPro" id="IPR013762">
    <property type="entry name" value="Integrase-like_cat_sf"/>
</dbReference>
<dbReference type="InterPro" id="IPR002104">
    <property type="entry name" value="Integrase_catalytic"/>
</dbReference>
<dbReference type="InterPro" id="IPR010998">
    <property type="entry name" value="Integrase_recombinase_N"/>
</dbReference>
<dbReference type="InterPro" id="IPR050808">
    <property type="entry name" value="Phage_Integrase"/>
</dbReference>
<dbReference type="PANTHER" id="PTHR30629">
    <property type="entry name" value="PROPHAGE INTEGRASE"/>
    <property type="match status" value="1"/>
</dbReference>
<dbReference type="PANTHER" id="PTHR30629:SF2">
    <property type="entry name" value="PROPHAGE INTEGRASE INTS-RELATED"/>
    <property type="match status" value="1"/>
</dbReference>
<dbReference type="Pfam" id="PF00589">
    <property type="entry name" value="Phage_integrase"/>
    <property type="match status" value="1"/>
</dbReference>
<dbReference type="SUPFAM" id="SSF56349">
    <property type="entry name" value="DNA breaking-rejoining enzymes"/>
    <property type="match status" value="1"/>
</dbReference>
<dbReference type="PROSITE" id="PS51900">
    <property type="entry name" value="CB"/>
    <property type="match status" value="1"/>
</dbReference>
<dbReference type="PROSITE" id="PS51898">
    <property type="entry name" value="TYR_RECOMBINASE"/>
    <property type="match status" value="1"/>
</dbReference>
<organism>
    <name type="scientific">Streptomyces ambofaciens</name>
    <dbReference type="NCBI Taxonomy" id="1889"/>
    <lineage>
        <taxon>Bacteria</taxon>
        <taxon>Bacillati</taxon>
        <taxon>Actinomycetota</taxon>
        <taxon>Actinomycetes</taxon>
        <taxon>Kitasatosporales</taxon>
        <taxon>Streptomycetaceae</taxon>
        <taxon>Streptomyces</taxon>
    </lineage>
</organism>
<sequence length="388" mass="43059">MAKRRSRGDGGLHWDEKRQRWIATANLGFDPSGKRIVKRGSGKTKTEAKNKLKEVLRDHEDGLAIAPTGYTVADAVNDWLAYGLAGRDQRTVENCTHLSQKHVIPGLGARKLRDLSAEDVDRWLAAKAQTLSTRSLQAVHSCLNRAVKRAMARDKVKRNVVELCSVPQGQPGRPSKALTFAQAEAVLNAAEGTSMHAYIVVALLTGARTEELRALTWDHVFLKGSPDVEPPQPPHIAVWRSVRRGGDTKTRKSRRTLALPARCVEVLWQHFEDQGWERLAAGDKWEEHGLVFSSAVGKPLDATNVRRAFRQALKDANGINADEWTPRELRHSFVSLLSDRGVPLEEISRLVGHSGTAVTEEVYRKQIRPVIQTGAVVMDGIFKRGPAR</sequence>
<evidence type="ECO:0000255" key="1">
    <source>
        <dbReference type="PROSITE-ProRule" id="PRU01246"/>
    </source>
</evidence>
<evidence type="ECO:0000255" key="2">
    <source>
        <dbReference type="PROSITE-ProRule" id="PRU01248"/>
    </source>
</evidence>
<evidence type="ECO:0000305" key="3"/>